<feature type="chain" id="PRO_0000338758" description="Translation initiation factor IF-1">
    <location>
        <begin position="1"/>
        <end position="73"/>
    </location>
</feature>
<feature type="domain" description="S1-like" evidence="1">
    <location>
        <begin position="1"/>
        <end position="73"/>
    </location>
</feature>
<protein>
    <recommendedName>
        <fullName evidence="1">Translation initiation factor IF-1</fullName>
    </recommendedName>
</protein>
<evidence type="ECO:0000255" key="1">
    <source>
        <dbReference type="HAMAP-Rule" id="MF_00075"/>
    </source>
</evidence>
<keyword id="KW-0963">Cytoplasm</keyword>
<keyword id="KW-0396">Initiation factor</keyword>
<keyword id="KW-0648">Protein biosynthesis</keyword>
<keyword id="KW-1185">Reference proteome</keyword>
<keyword id="KW-0694">RNA-binding</keyword>
<keyword id="KW-0699">rRNA-binding</keyword>
<organism>
    <name type="scientific">Anaeromyxobacter sp. (strain Fw109-5)</name>
    <dbReference type="NCBI Taxonomy" id="404589"/>
    <lineage>
        <taxon>Bacteria</taxon>
        <taxon>Pseudomonadati</taxon>
        <taxon>Myxococcota</taxon>
        <taxon>Myxococcia</taxon>
        <taxon>Myxococcales</taxon>
        <taxon>Cystobacterineae</taxon>
        <taxon>Anaeromyxobacteraceae</taxon>
        <taxon>Anaeromyxobacter</taxon>
    </lineage>
</organism>
<gene>
    <name evidence="1" type="primary">infA</name>
    <name type="ordered locus">Anae109_2531</name>
</gene>
<proteinExistence type="inferred from homology"/>
<accession>A7HDD6</accession>
<dbReference type="EMBL" id="CP000769">
    <property type="protein sequence ID" value="ABS26732.1"/>
    <property type="molecule type" value="Genomic_DNA"/>
</dbReference>
<dbReference type="RefSeq" id="WP_012097326.1">
    <property type="nucleotide sequence ID" value="NC_009675.1"/>
</dbReference>
<dbReference type="SMR" id="A7HDD6"/>
<dbReference type="STRING" id="404589.Anae109_2531"/>
<dbReference type="KEGG" id="afw:Anae109_2531"/>
<dbReference type="eggNOG" id="COG0361">
    <property type="taxonomic scope" value="Bacteria"/>
</dbReference>
<dbReference type="HOGENOM" id="CLU_151267_1_0_7"/>
<dbReference type="OrthoDB" id="9803250at2"/>
<dbReference type="Proteomes" id="UP000006382">
    <property type="component" value="Chromosome"/>
</dbReference>
<dbReference type="GO" id="GO:0005829">
    <property type="term" value="C:cytosol"/>
    <property type="evidence" value="ECO:0007669"/>
    <property type="project" value="TreeGrafter"/>
</dbReference>
<dbReference type="GO" id="GO:0043022">
    <property type="term" value="F:ribosome binding"/>
    <property type="evidence" value="ECO:0007669"/>
    <property type="project" value="UniProtKB-UniRule"/>
</dbReference>
<dbReference type="GO" id="GO:0019843">
    <property type="term" value="F:rRNA binding"/>
    <property type="evidence" value="ECO:0007669"/>
    <property type="project" value="UniProtKB-UniRule"/>
</dbReference>
<dbReference type="GO" id="GO:0003743">
    <property type="term" value="F:translation initiation factor activity"/>
    <property type="evidence" value="ECO:0007669"/>
    <property type="project" value="UniProtKB-UniRule"/>
</dbReference>
<dbReference type="CDD" id="cd04451">
    <property type="entry name" value="S1_IF1"/>
    <property type="match status" value="1"/>
</dbReference>
<dbReference type="FunFam" id="2.40.50.140:FF:000002">
    <property type="entry name" value="Translation initiation factor IF-1"/>
    <property type="match status" value="1"/>
</dbReference>
<dbReference type="Gene3D" id="2.40.50.140">
    <property type="entry name" value="Nucleic acid-binding proteins"/>
    <property type="match status" value="1"/>
</dbReference>
<dbReference type="HAMAP" id="MF_00075">
    <property type="entry name" value="IF_1"/>
    <property type="match status" value="1"/>
</dbReference>
<dbReference type="InterPro" id="IPR012340">
    <property type="entry name" value="NA-bd_OB-fold"/>
</dbReference>
<dbReference type="InterPro" id="IPR006196">
    <property type="entry name" value="RNA-binding_domain_S1_IF1"/>
</dbReference>
<dbReference type="InterPro" id="IPR004368">
    <property type="entry name" value="TIF_IF1"/>
</dbReference>
<dbReference type="NCBIfam" id="TIGR00008">
    <property type="entry name" value="infA"/>
    <property type="match status" value="1"/>
</dbReference>
<dbReference type="PANTHER" id="PTHR33370">
    <property type="entry name" value="TRANSLATION INITIATION FACTOR IF-1, CHLOROPLASTIC"/>
    <property type="match status" value="1"/>
</dbReference>
<dbReference type="PANTHER" id="PTHR33370:SF1">
    <property type="entry name" value="TRANSLATION INITIATION FACTOR IF-1, CHLOROPLASTIC"/>
    <property type="match status" value="1"/>
</dbReference>
<dbReference type="Pfam" id="PF01176">
    <property type="entry name" value="eIF-1a"/>
    <property type="match status" value="1"/>
</dbReference>
<dbReference type="SUPFAM" id="SSF50249">
    <property type="entry name" value="Nucleic acid-binding proteins"/>
    <property type="match status" value="1"/>
</dbReference>
<dbReference type="PROSITE" id="PS50832">
    <property type="entry name" value="S1_IF1_TYPE"/>
    <property type="match status" value="1"/>
</dbReference>
<reference key="1">
    <citation type="journal article" date="2015" name="Genome Announc.">
        <title>Complete genome sequence of Anaeromyxobacter sp. Fw109-5, an anaerobic, metal-reducing bacterium isolated from a contaminated subsurface environment.</title>
        <authorList>
            <person name="Hwang C."/>
            <person name="Copeland A."/>
            <person name="Lucas S."/>
            <person name="Lapidus A."/>
            <person name="Barry K."/>
            <person name="Glavina Del Rio T."/>
            <person name="Dalin E."/>
            <person name="Tice H."/>
            <person name="Pitluck S."/>
            <person name="Sims D."/>
            <person name="Brettin T."/>
            <person name="Bruce D.C."/>
            <person name="Detter J.C."/>
            <person name="Han C.S."/>
            <person name="Schmutz J."/>
            <person name="Larimer F.W."/>
            <person name="Land M.L."/>
            <person name="Hauser L.J."/>
            <person name="Kyrpides N."/>
            <person name="Lykidis A."/>
            <person name="Richardson P."/>
            <person name="Belieav A."/>
            <person name="Sanford R.A."/>
            <person name="Loeffler F.E."/>
            <person name="Fields M.W."/>
        </authorList>
    </citation>
    <scope>NUCLEOTIDE SEQUENCE [LARGE SCALE GENOMIC DNA]</scope>
    <source>
        <strain>Fw109-5</strain>
    </source>
</reference>
<comment type="function">
    <text evidence="1">One of the essential components for the initiation of protein synthesis. Stabilizes the binding of IF-2 and IF-3 on the 30S subunit to which N-formylmethionyl-tRNA(fMet) subsequently binds. Helps modulate mRNA selection, yielding the 30S pre-initiation complex (PIC). Upon addition of the 50S ribosomal subunit IF-1, IF-2 and IF-3 are released leaving the mature 70S translation initiation complex.</text>
</comment>
<comment type="subunit">
    <text evidence="1">Component of the 30S ribosomal translation pre-initiation complex which assembles on the 30S ribosome in the order IF-2 and IF-3, IF-1 and N-formylmethionyl-tRNA(fMet); mRNA recruitment can occur at any time during PIC assembly.</text>
</comment>
<comment type="subcellular location">
    <subcellularLocation>
        <location evidence="1">Cytoplasm</location>
    </subcellularLocation>
</comment>
<comment type="similarity">
    <text evidence="1">Belongs to the IF-1 family.</text>
</comment>
<name>IF1_ANADF</name>
<sequence>MSEKEAGIEVQGTVEEALAGGMYRVKVDQGPTVLAYASGKMKKFHIRIIPGDRVKLELSPYDLTRGRITYRDK</sequence>